<sequence length="23" mass="2442">FLPLVRGAAKLIPSVVCAISKRC</sequence>
<organism>
    <name type="scientific">Lithobates sevosus</name>
    <name type="common">Dusky gopher frog</name>
    <name type="synonym">Rana sevosa</name>
    <dbReference type="NCBI Taxonomy" id="299683"/>
    <lineage>
        <taxon>Eukaryota</taxon>
        <taxon>Metazoa</taxon>
        <taxon>Chordata</taxon>
        <taxon>Craniata</taxon>
        <taxon>Vertebrata</taxon>
        <taxon>Euteleostomi</taxon>
        <taxon>Amphibia</taxon>
        <taxon>Batrachia</taxon>
        <taxon>Anura</taxon>
        <taxon>Neobatrachia</taxon>
        <taxon>Ranoidea</taxon>
        <taxon>Ranidae</taxon>
        <taxon>Lithobates</taxon>
    </lineage>
</organism>
<protein>
    <recommendedName>
        <fullName>Brevinin-1SE</fullName>
    </recommendedName>
</protein>
<accession>P85056</accession>
<dbReference type="GO" id="GO:0005576">
    <property type="term" value="C:extracellular region"/>
    <property type="evidence" value="ECO:0000314"/>
    <property type="project" value="UniProtKB"/>
</dbReference>
<dbReference type="GO" id="GO:0050829">
    <property type="term" value="P:defense response to Gram-negative bacterium"/>
    <property type="evidence" value="ECO:0000314"/>
    <property type="project" value="UniProtKB"/>
</dbReference>
<dbReference type="GO" id="GO:0050830">
    <property type="term" value="P:defense response to Gram-positive bacterium"/>
    <property type="evidence" value="ECO:0000314"/>
    <property type="project" value="UniProtKB"/>
</dbReference>
<dbReference type="GO" id="GO:0002553">
    <property type="term" value="P:histamine secretion by mast cell"/>
    <property type="evidence" value="ECO:0000314"/>
    <property type="project" value="UniProtKB"/>
</dbReference>
<dbReference type="GO" id="GO:0043306">
    <property type="term" value="P:positive regulation of mast cell degranulation"/>
    <property type="evidence" value="ECO:0000314"/>
    <property type="project" value="UniProtKB"/>
</dbReference>
<dbReference type="InterPro" id="IPR012520">
    <property type="entry name" value="Antimicrobial_frog_1"/>
</dbReference>
<dbReference type="Pfam" id="PF08018">
    <property type="entry name" value="Antimicrobial_1"/>
    <property type="match status" value="1"/>
</dbReference>
<feature type="peptide" id="PRO_0000271237" description="Brevinin-1SE" evidence="3">
    <location>
        <begin position="1"/>
        <end position="23"/>
    </location>
</feature>
<feature type="disulfide bond" evidence="1">
    <location>
        <begin position="17"/>
        <end position="23"/>
    </location>
</feature>
<proteinExistence type="evidence at protein level"/>
<reference evidence="4" key="1">
    <citation type="journal article" date="2006" name="Peptides">
        <title>Histamine-releasing and antimicrobial peptides from the skin secretions of the dusky gopher frog, Rana sevosa.</title>
        <authorList>
            <person name="Graham C."/>
            <person name="Richter S.C."/>
            <person name="McClean S."/>
            <person name="O'Kane E."/>
            <person name="Flatt P.R."/>
            <person name="Shaw C."/>
        </authorList>
    </citation>
    <scope>PROTEIN SEQUENCE</scope>
    <scope>FUNCTION</scope>
    <scope>SUBCELLULAR LOCATION</scope>
    <scope>TISSUE SPECIFICITY</scope>
    <scope>MASS SPECTROMETRY</scope>
    <source>
        <tissue evidence="3">Skin secretion</tissue>
    </source>
</reference>
<name>BR1_LITSE</name>
<keyword id="KW-0878">Amphibian defense peptide</keyword>
<keyword id="KW-0044">Antibiotic</keyword>
<keyword id="KW-0929">Antimicrobial</keyword>
<keyword id="KW-0903">Direct protein sequencing</keyword>
<keyword id="KW-1015">Disulfide bond</keyword>
<keyword id="KW-0395">Inflammatory response</keyword>
<keyword id="KW-0467">Mast cell degranulation</keyword>
<keyword id="KW-0964">Secreted</keyword>
<evidence type="ECO:0000250" key="1">
    <source>
        <dbReference type="UniProtKB" id="P40835"/>
    </source>
</evidence>
<evidence type="ECO:0000255" key="2"/>
<evidence type="ECO:0000269" key="3">
    <source>
    </source>
</evidence>
<evidence type="ECO:0000305" key="4"/>
<comment type="function">
    <text evidence="3">Mast cell degranulating peptide. Causes histamine release from rat peritoneal mast cells in vitro. Has antibacterial activity against the Gram-negative bacterium E.coli K12 and Gram-positive bacterium M.luteus NCT C2665.</text>
</comment>
<comment type="subcellular location">
    <subcellularLocation>
        <location evidence="3">Secreted</location>
    </subcellularLocation>
</comment>
<comment type="tissue specificity">
    <text evidence="3">Expressed by the skin glands.</text>
</comment>
<comment type="mass spectrometry" mass="2481.0" method="MALDI" evidence="3"/>
<comment type="mass spectrometry" mass="2481.0" method="Electrospray" evidence="3"/>
<comment type="similarity">
    <text evidence="2">Belongs to the frog skin active peptide (FSAP) family. Brevinin subfamily.</text>
</comment>